<proteinExistence type="inferred from homology"/>
<organism>
    <name type="scientific">Leptospira interrogans serogroup Icterohaemorrhagiae serovar copenhageni (strain Fiocruz L1-130)</name>
    <dbReference type="NCBI Taxonomy" id="267671"/>
    <lineage>
        <taxon>Bacteria</taxon>
        <taxon>Pseudomonadati</taxon>
        <taxon>Spirochaetota</taxon>
        <taxon>Spirochaetia</taxon>
        <taxon>Leptospirales</taxon>
        <taxon>Leptospiraceae</taxon>
        <taxon>Leptospira</taxon>
    </lineage>
</organism>
<dbReference type="EC" id="2.1.1.-"/>
<dbReference type="EMBL" id="AE016823">
    <property type="protein sequence ID" value="AAS68877.1"/>
    <property type="molecule type" value="Genomic_DNA"/>
</dbReference>
<dbReference type="SMR" id="Q72VP7"/>
<dbReference type="KEGG" id="lic:LIC_10249"/>
<dbReference type="HOGENOM" id="CLU_014689_7_2_12"/>
<dbReference type="Proteomes" id="UP000007037">
    <property type="component" value="Chromosome I"/>
</dbReference>
<dbReference type="GO" id="GO:0051539">
    <property type="term" value="F:4 iron, 4 sulfur cluster binding"/>
    <property type="evidence" value="ECO:0007669"/>
    <property type="project" value="UniProtKB-KW"/>
</dbReference>
<dbReference type="GO" id="GO:0046872">
    <property type="term" value="F:metal ion binding"/>
    <property type="evidence" value="ECO:0007669"/>
    <property type="project" value="UniProtKB-KW"/>
</dbReference>
<dbReference type="GO" id="GO:0070041">
    <property type="term" value="F:rRNA (uridine-C5-)-methyltransferase activity"/>
    <property type="evidence" value="ECO:0007669"/>
    <property type="project" value="TreeGrafter"/>
</dbReference>
<dbReference type="GO" id="GO:0070475">
    <property type="term" value="P:rRNA base methylation"/>
    <property type="evidence" value="ECO:0007669"/>
    <property type="project" value="TreeGrafter"/>
</dbReference>
<dbReference type="CDD" id="cd02440">
    <property type="entry name" value="AdoMet_MTases"/>
    <property type="match status" value="1"/>
</dbReference>
<dbReference type="Gene3D" id="2.40.50.1070">
    <property type="match status" value="1"/>
</dbReference>
<dbReference type="Gene3D" id="3.40.50.150">
    <property type="entry name" value="Vaccinia Virus protein VP39"/>
    <property type="match status" value="1"/>
</dbReference>
<dbReference type="InterPro" id="IPR030390">
    <property type="entry name" value="MeTrfase_TrmA_AS"/>
</dbReference>
<dbReference type="InterPro" id="IPR030391">
    <property type="entry name" value="MeTrfase_TrmA_CS"/>
</dbReference>
<dbReference type="InterPro" id="IPR029063">
    <property type="entry name" value="SAM-dependent_MTases_sf"/>
</dbReference>
<dbReference type="InterPro" id="IPR010280">
    <property type="entry name" value="U5_MeTrfase_fam"/>
</dbReference>
<dbReference type="NCBIfam" id="TIGR00479">
    <property type="entry name" value="rumA"/>
    <property type="match status" value="1"/>
</dbReference>
<dbReference type="PANTHER" id="PTHR11061">
    <property type="entry name" value="RNA M5U METHYLTRANSFERASE"/>
    <property type="match status" value="1"/>
</dbReference>
<dbReference type="PANTHER" id="PTHR11061:SF30">
    <property type="entry name" value="TRNA (URACIL(54)-C(5))-METHYLTRANSFERASE"/>
    <property type="match status" value="1"/>
</dbReference>
<dbReference type="Pfam" id="PF05958">
    <property type="entry name" value="tRNA_U5-meth_tr"/>
    <property type="match status" value="1"/>
</dbReference>
<dbReference type="SUPFAM" id="SSF53335">
    <property type="entry name" value="S-adenosyl-L-methionine-dependent methyltransferases"/>
    <property type="match status" value="1"/>
</dbReference>
<dbReference type="PROSITE" id="PS51687">
    <property type="entry name" value="SAM_MT_RNA_M5U"/>
    <property type="match status" value="1"/>
</dbReference>
<dbReference type="PROSITE" id="PS01230">
    <property type="entry name" value="TRMA_1"/>
    <property type="match status" value="1"/>
</dbReference>
<dbReference type="PROSITE" id="PS01231">
    <property type="entry name" value="TRMA_2"/>
    <property type="match status" value="1"/>
</dbReference>
<protein>
    <recommendedName>
        <fullName>Uncharacterized RNA methyltransferase LIC_10249</fullName>
        <ecNumber>2.1.1.-</ecNumber>
    </recommendedName>
</protein>
<keyword id="KW-0004">4Fe-4S</keyword>
<keyword id="KW-0408">Iron</keyword>
<keyword id="KW-0411">Iron-sulfur</keyword>
<keyword id="KW-0479">Metal-binding</keyword>
<keyword id="KW-0489">Methyltransferase</keyword>
<keyword id="KW-0949">S-adenosyl-L-methionine</keyword>
<keyword id="KW-0808">Transferase</keyword>
<name>Y249_LEPIC</name>
<accession>Q72VP7</accession>
<feature type="chain" id="PRO_0000161992" description="Uncharacterized RNA methyltransferase LIC_10249">
    <location>
        <begin position="1"/>
        <end position="393"/>
    </location>
</feature>
<feature type="active site" description="Nucleophile" evidence="2">
    <location>
        <position position="352"/>
    </location>
</feature>
<feature type="binding site" evidence="1">
    <location>
        <position position="9"/>
    </location>
    <ligand>
        <name>[4Fe-4S] cluster</name>
        <dbReference type="ChEBI" id="CHEBI:49883"/>
    </ligand>
</feature>
<feature type="binding site" evidence="1">
    <location>
        <position position="15"/>
    </location>
    <ligand>
        <name>[4Fe-4S] cluster</name>
        <dbReference type="ChEBI" id="CHEBI:49883"/>
    </ligand>
</feature>
<feature type="binding site" evidence="1">
    <location>
        <position position="18"/>
    </location>
    <ligand>
        <name>[4Fe-4S] cluster</name>
        <dbReference type="ChEBI" id="CHEBI:49883"/>
    </ligand>
</feature>
<feature type="binding site" evidence="1">
    <location>
        <position position="97"/>
    </location>
    <ligand>
        <name>[4Fe-4S] cluster</name>
        <dbReference type="ChEBI" id="CHEBI:49883"/>
    </ligand>
</feature>
<feature type="binding site" evidence="2">
    <location>
        <position position="231"/>
    </location>
    <ligand>
        <name>S-adenosyl-L-methionine</name>
        <dbReference type="ChEBI" id="CHEBI:59789"/>
    </ligand>
</feature>
<feature type="binding site" evidence="2">
    <location>
        <position position="258"/>
    </location>
    <ligand>
        <name>S-adenosyl-L-methionine</name>
        <dbReference type="ChEBI" id="CHEBI:59789"/>
    </ligand>
</feature>
<feature type="binding site" evidence="2">
    <location>
        <position position="279"/>
    </location>
    <ligand>
        <name>S-adenosyl-L-methionine</name>
        <dbReference type="ChEBI" id="CHEBI:59789"/>
    </ligand>
</feature>
<feature type="binding site" evidence="2">
    <location>
        <position position="325"/>
    </location>
    <ligand>
        <name>S-adenosyl-L-methionine</name>
        <dbReference type="ChEBI" id="CHEBI:59789"/>
    </ligand>
</feature>
<sequence>MKPPVNQSCQHYPECAGCDRLHIGYEKQLQHKQEEIEKRFKGFKGLEIRQIIKSPKDQMYRHKVQLPFGHRKIGKKSVLTLGLHNKENTFIIDQKECRIQDEDLTTVAAAIRHWARNENLEPYHEKKGSGLLRHIVLRKANATQEILVGIVTNESEIPGRKKLTDRLYSYIQQFLYKENSKADVVGILQNVNRKNTKVVLGEKEVTWYGRHFVKEKIGKLDFQIGLSTFFQVNPFQIENLYNLILEDLPENKCVVDAYCGIGTISLYIASKSKKVIGLEENSSSIRSAIGASKANGIENVHFIKGKVLDTLRAALNENSDVVVLDPPREGLDAETKSILLNSKVNQILYVSCNPETLLRDAIELTKSFKYEKITPVDLFPHTSHLESVSVFTK</sequence>
<gene>
    <name type="ordered locus">LIC_10249</name>
</gene>
<reference key="1">
    <citation type="journal article" date="2004" name="J. Bacteriol.">
        <title>Comparative genomics of two Leptospira interrogans serovars reveals novel insights into physiology and pathogenesis.</title>
        <authorList>
            <person name="Nascimento A.L.T.O."/>
            <person name="Ko A.I."/>
            <person name="Martins E.A.L."/>
            <person name="Monteiro-Vitorello C.B."/>
            <person name="Ho P.L."/>
            <person name="Haake D.A."/>
            <person name="Verjovski-Almeida S."/>
            <person name="Hartskeerl R.A."/>
            <person name="Marques M.V."/>
            <person name="Oliveira M.C."/>
            <person name="Menck C.F.M."/>
            <person name="Leite L.C.C."/>
            <person name="Carrer H."/>
            <person name="Coutinho L.L."/>
            <person name="Degrave W.M."/>
            <person name="Dellagostin O.A."/>
            <person name="El-Dorry H."/>
            <person name="Ferro E.S."/>
            <person name="Ferro M.I.T."/>
            <person name="Furlan L.R."/>
            <person name="Gamberini M."/>
            <person name="Giglioti E.A."/>
            <person name="Goes-Neto A."/>
            <person name="Goldman G.H."/>
            <person name="Goldman M.H.S."/>
            <person name="Harakava R."/>
            <person name="Jeronimo S.M.B."/>
            <person name="Junqueira-de-Azevedo I.L.M."/>
            <person name="Kimura E.T."/>
            <person name="Kuramae E.E."/>
            <person name="Lemos E.G.M."/>
            <person name="Lemos M.V.F."/>
            <person name="Marino C.L."/>
            <person name="Nunes L.R."/>
            <person name="de Oliveira R.C."/>
            <person name="Pereira G.G."/>
            <person name="Reis M.S."/>
            <person name="Schriefer A."/>
            <person name="Siqueira W.J."/>
            <person name="Sommer P."/>
            <person name="Tsai S.M."/>
            <person name="Simpson A.J.G."/>
            <person name="Ferro J.A."/>
            <person name="Camargo L.E.A."/>
            <person name="Kitajima J.P."/>
            <person name="Setubal J.C."/>
            <person name="Van Sluys M.A."/>
        </authorList>
    </citation>
    <scope>NUCLEOTIDE SEQUENCE [LARGE SCALE GENOMIC DNA]</scope>
    <source>
        <strain>Fiocruz L1-130</strain>
    </source>
</reference>
<evidence type="ECO:0000250" key="1"/>
<evidence type="ECO:0000255" key="2">
    <source>
        <dbReference type="PROSITE-ProRule" id="PRU01024"/>
    </source>
</evidence>
<comment type="similarity">
    <text evidence="2">Belongs to the class I-like SAM-binding methyltransferase superfamily. RNA M5U methyltransferase family.</text>
</comment>